<sequence>MANHKSAAKRAKQSEARRLRNKSTRSSMNTAVKKVRTAKEAGTDNATDLLNSAKSLIAKAAKKGVIHQNTAARKISRLTKSLG</sequence>
<accession>C0QI73</accession>
<keyword id="KW-1185">Reference proteome</keyword>
<keyword id="KW-0687">Ribonucleoprotein</keyword>
<keyword id="KW-0689">Ribosomal protein</keyword>
<keyword id="KW-0694">RNA-binding</keyword>
<keyword id="KW-0699">rRNA-binding</keyword>
<organism>
    <name type="scientific">Desulforapulum autotrophicum (strain ATCC 43914 / DSM 3382 / VKM B-1955 / HRM2)</name>
    <name type="common">Desulfobacterium autotrophicum</name>
    <dbReference type="NCBI Taxonomy" id="177437"/>
    <lineage>
        <taxon>Bacteria</taxon>
        <taxon>Pseudomonadati</taxon>
        <taxon>Thermodesulfobacteriota</taxon>
        <taxon>Desulfobacteria</taxon>
        <taxon>Desulfobacterales</taxon>
        <taxon>Desulfobacteraceae</taxon>
        <taxon>Desulforapulum</taxon>
    </lineage>
</organism>
<proteinExistence type="inferred from homology"/>
<protein>
    <recommendedName>
        <fullName evidence="1">Small ribosomal subunit protein bS20</fullName>
    </recommendedName>
    <alternativeName>
        <fullName evidence="3">30S ribosomal protein S20</fullName>
    </alternativeName>
</protein>
<evidence type="ECO:0000255" key="1">
    <source>
        <dbReference type="HAMAP-Rule" id="MF_00500"/>
    </source>
</evidence>
<evidence type="ECO:0000256" key="2">
    <source>
        <dbReference type="SAM" id="MobiDB-lite"/>
    </source>
</evidence>
<evidence type="ECO:0000305" key="3"/>
<comment type="function">
    <text evidence="1">Binds directly to 16S ribosomal RNA.</text>
</comment>
<comment type="similarity">
    <text evidence="1">Belongs to the bacterial ribosomal protein bS20 family.</text>
</comment>
<reference key="1">
    <citation type="journal article" date="2009" name="Environ. Microbiol.">
        <title>Genome sequence of Desulfobacterium autotrophicum HRM2, a marine sulfate reducer oxidizing organic carbon completely to carbon dioxide.</title>
        <authorList>
            <person name="Strittmatter A.W."/>
            <person name="Liesegang H."/>
            <person name="Rabus R."/>
            <person name="Decker I."/>
            <person name="Amann J."/>
            <person name="Andres S."/>
            <person name="Henne A."/>
            <person name="Fricke W.F."/>
            <person name="Martinez-Arias R."/>
            <person name="Bartels D."/>
            <person name="Goesmann A."/>
            <person name="Krause L."/>
            <person name="Puehler A."/>
            <person name="Klenk H.P."/>
            <person name="Richter M."/>
            <person name="Schuler M."/>
            <person name="Gloeckner F.O."/>
            <person name="Meyerdierks A."/>
            <person name="Gottschalk G."/>
            <person name="Amann R."/>
        </authorList>
    </citation>
    <scope>NUCLEOTIDE SEQUENCE [LARGE SCALE GENOMIC DNA]</scope>
    <source>
        <strain>ATCC 43914 / DSM 3382 / VKM B-1955 / HRM2</strain>
    </source>
</reference>
<gene>
    <name evidence="1" type="primary">rpsT</name>
    <name type="ordered locus">HRM2_27170</name>
</gene>
<name>RS20_DESAH</name>
<dbReference type="EMBL" id="CP001087">
    <property type="protein sequence ID" value="ACN15809.1"/>
    <property type="molecule type" value="Genomic_DNA"/>
</dbReference>
<dbReference type="RefSeq" id="WP_015904572.1">
    <property type="nucleotide sequence ID" value="NC_012108.1"/>
</dbReference>
<dbReference type="SMR" id="C0QI73"/>
<dbReference type="STRING" id="177437.HRM2_27170"/>
<dbReference type="KEGG" id="dat:HRM2_27170"/>
<dbReference type="eggNOG" id="COG0268">
    <property type="taxonomic scope" value="Bacteria"/>
</dbReference>
<dbReference type="HOGENOM" id="CLU_160655_3_1_7"/>
<dbReference type="OrthoDB" id="9807974at2"/>
<dbReference type="Proteomes" id="UP000000442">
    <property type="component" value="Chromosome"/>
</dbReference>
<dbReference type="GO" id="GO:0015935">
    <property type="term" value="C:small ribosomal subunit"/>
    <property type="evidence" value="ECO:0007669"/>
    <property type="project" value="TreeGrafter"/>
</dbReference>
<dbReference type="GO" id="GO:0070181">
    <property type="term" value="F:small ribosomal subunit rRNA binding"/>
    <property type="evidence" value="ECO:0007669"/>
    <property type="project" value="TreeGrafter"/>
</dbReference>
<dbReference type="GO" id="GO:0003735">
    <property type="term" value="F:structural constituent of ribosome"/>
    <property type="evidence" value="ECO:0007669"/>
    <property type="project" value="InterPro"/>
</dbReference>
<dbReference type="GO" id="GO:0006412">
    <property type="term" value="P:translation"/>
    <property type="evidence" value="ECO:0007669"/>
    <property type="project" value="UniProtKB-UniRule"/>
</dbReference>
<dbReference type="FunFam" id="1.20.58.110:FF:000001">
    <property type="entry name" value="30S ribosomal protein S20"/>
    <property type="match status" value="1"/>
</dbReference>
<dbReference type="Gene3D" id="1.20.58.110">
    <property type="entry name" value="Ribosomal protein S20"/>
    <property type="match status" value="1"/>
</dbReference>
<dbReference type="HAMAP" id="MF_00500">
    <property type="entry name" value="Ribosomal_bS20"/>
    <property type="match status" value="1"/>
</dbReference>
<dbReference type="InterPro" id="IPR002583">
    <property type="entry name" value="Ribosomal_bS20"/>
</dbReference>
<dbReference type="InterPro" id="IPR036510">
    <property type="entry name" value="Ribosomal_bS20_sf"/>
</dbReference>
<dbReference type="NCBIfam" id="TIGR00029">
    <property type="entry name" value="S20"/>
    <property type="match status" value="1"/>
</dbReference>
<dbReference type="PANTHER" id="PTHR33398">
    <property type="entry name" value="30S RIBOSOMAL PROTEIN S20"/>
    <property type="match status" value="1"/>
</dbReference>
<dbReference type="PANTHER" id="PTHR33398:SF1">
    <property type="entry name" value="SMALL RIBOSOMAL SUBUNIT PROTEIN BS20C"/>
    <property type="match status" value="1"/>
</dbReference>
<dbReference type="Pfam" id="PF01649">
    <property type="entry name" value="Ribosomal_S20p"/>
    <property type="match status" value="1"/>
</dbReference>
<dbReference type="SUPFAM" id="SSF46992">
    <property type="entry name" value="Ribosomal protein S20"/>
    <property type="match status" value="1"/>
</dbReference>
<feature type="chain" id="PRO_1000206495" description="Small ribosomal subunit protein bS20">
    <location>
        <begin position="1"/>
        <end position="83"/>
    </location>
</feature>
<feature type="region of interest" description="Disordered" evidence="2">
    <location>
        <begin position="1"/>
        <end position="44"/>
    </location>
</feature>
<feature type="compositionally biased region" description="Basic residues" evidence="2">
    <location>
        <begin position="1"/>
        <end position="11"/>
    </location>
</feature>